<gene>
    <name evidence="1" type="primary">bioC</name>
    <name type="ordered locus">XfasM23_0822</name>
</gene>
<keyword id="KW-0093">Biotin biosynthesis</keyword>
<keyword id="KW-0489">Methyltransferase</keyword>
<keyword id="KW-0949">S-adenosyl-L-methionine</keyword>
<keyword id="KW-0808">Transferase</keyword>
<name>BIOC_XYLF2</name>
<accession>B2IAI0</accession>
<feature type="chain" id="PRO_0000412524" description="Malonyl-[acyl-carrier protein] O-methyltransferase">
    <location>
        <begin position="1"/>
        <end position="295"/>
    </location>
</feature>
<sequence>MNGLFDTYHIRRAFSRAAHSYDTNAVLQHEVEQRLLESLDYLGDRIPRVILDVGAGTGRASIAMKKRWPKAQVIALDQAMPMLQEARKRSHWWNPLALIYGDARTLPVADASVDVIFSNLCLQWIEDLPTVFAGFRQALRPGGLLLCSLFGPDTLIELRQAFAQADAVPHISPFPSMPQCGDALVLAHFQNPVLDRDLFTLTYDDLSALMRSLRAIGATNALQERRTTLTGRGRFAATAAAYETLRNADNKLPSSWEVIYACAWAPTSEPMTRENNHEIASIPINSIPIRRRNSS</sequence>
<evidence type="ECO:0000255" key="1">
    <source>
        <dbReference type="HAMAP-Rule" id="MF_00835"/>
    </source>
</evidence>
<reference key="1">
    <citation type="journal article" date="2010" name="J. Bacteriol.">
        <title>Whole genome sequences of two Xylella fastidiosa strains (M12 and M23) causing almond leaf scorch disease in California.</title>
        <authorList>
            <person name="Chen J."/>
            <person name="Xie G."/>
            <person name="Han S."/>
            <person name="Chertkov O."/>
            <person name="Sims D."/>
            <person name="Civerolo E.L."/>
        </authorList>
    </citation>
    <scope>NUCLEOTIDE SEQUENCE [LARGE SCALE GENOMIC DNA]</scope>
    <source>
        <strain>M23</strain>
    </source>
</reference>
<protein>
    <recommendedName>
        <fullName evidence="1">Malonyl-[acyl-carrier protein] O-methyltransferase</fullName>
        <shortName evidence="1">Malonyl-ACP O-methyltransferase</shortName>
        <ecNumber evidence="1">2.1.1.197</ecNumber>
    </recommendedName>
    <alternativeName>
        <fullName evidence="1">Biotin synthesis protein BioC</fullName>
    </alternativeName>
</protein>
<organism>
    <name type="scientific">Xylella fastidiosa (strain M23)</name>
    <dbReference type="NCBI Taxonomy" id="405441"/>
    <lineage>
        <taxon>Bacteria</taxon>
        <taxon>Pseudomonadati</taxon>
        <taxon>Pseudomonadota</taxon>
        <taxon>Gammaproteobacteria</taxon>
        <taxon>Lysobacterales</taxon>
        <taxon>Lysobacteraceae</taxon>
        <taxon>Xylella</taxon>
    </lineage>
</organism>
<proteinExistence type="inferred from homology"/>
<dbReference type="EC" id="2.1.1.197" evidence="1"/>
<dbReference type="EMBL" id="CP001011">
    <property type="protein sequence ID" value="ACB92260.1"/>
    <property type="molecule type" value="Genomic_DNA"/>
</dbReference>
<dbReference type="RefSeq" id="WP_004091225.1">
    <property type="nucleotide sequence ID" value="NC_010577.1"/>
</dbReference>
<dbReference type="SMR" id="B2IAI0"/>
<dbReference type="GeneID" id="93904562"/>
<dbReference type="KEGG" id="xfn:XfasM23_0822"/>
<dbReference type="HOGENOM" id="CLU_046586_2_2_6"/>
<dbReference type="UniPathway" id="UPA00078"/>
<dbReference type="Proteomes" id="UP000001698">
    <property type="component" value="Chromosome"/>
</dbReference>
<dbReference type="GO" id="GO:0010340">
    <property type="term" value="F:carboxyl-O-methyltransferase activity"/>
    <property type="evidence" value="ECO:0007669"/>
    <property type="project" value="UniProtKB-UniRule"/>
</dbReference>
<dbReference type="GO" id="GO:0102130">
    <property type="term" value="F:malonyl-CoA methyltransferase activity"/>
    <property type="evidence" value="ECO:0007669"/>
    <property type="project" value="UniProtKB-EC"/>
</dbReference>
<dbReference type="GO" id="GO:0008757">
    <property type="term" value="F:S-adenosylmethionine-dependent methyltransferase activity"/>
    <property type="evidence" value="ECO:0007669"/>
    <property type="project" value="InterPro"/>
</dbReference>
<dbReference type="GO" id="GO:0009102">
    <property type="term" value="P:biotin biosynthetic process"/>
    <property type="evidence" value="ECO:0007669"/>
    <property type="project" value="UniProtKB-UniRule"/>
</dbReference>
<dbReference type="GO" id="GO:0032259">
    <property type="term" value="P:methylation"/>
    <property type="evidence" value="ECO:0007669"/>
    <property type="project" value="UniProtKB-KW"/>
</dbReference>
<dbReference type="CDD" id="cd02440">
    <property type="entry name" value="AdoMet_MTases"/>
    <property type="match status" value="1"/>
</dbReference>
<dbReference type="Gene3D" id="3.40.50.150">
    <property type="entry name" value="Vaccinia Virus protein VP39"/>
    <property type="match status" value="1"/>
</dbReference>
<dbReference type="HAMAP" id="MF_00835">
    <property type="entry name" value="BioC"/>
    <property type="match status" value="1"/>
</dbReference>
<dbReference type="InterPro" id="IPR011814">
    <property type="entry name" value="BioC"/>
</dbReference>
<dbReference type="InterPro" id="IPR050602">
    <property type="entry name" value="Malonyl-ACP_OMT"/>
</dbReference>
<dbReference type="InterPro" id="IPR013216">
    <property type="entry name" value="Methyltransf_11"/>
</dbReference>
<dbReference type="InterPro" id="IPR029063">
    <property type="entry name" value="SAM-dependent_MTases_sf"/>
</dbReference>
<dbReference type="NCBIfam" id="TIGR02072">
    <property type="entry name" value="BioC"/>
    <property type="match status" value="1"/>
</dbReference>
<dbReference type="PANTHER" id="PTHR13090">
    <property type="entry name" value="ARGININE-HYDROXYLASE NDUFAF5, MITOCHONDRIAL"/>
    <property type="match status" value="1"/>
</dbReference>
<dbReference type="PANTHER" id="PTHR13090:SF1">
    <property type="entry name" value="ARGININE-HYDROXYLASE NDUFAF5, MITOCHONDRIAL"/>
    <property type="match status" value="1"/>
</dbReference>
<dbReference type="Pfam" id="PF08241">
    <property type="entry name" value="Methyltransf_11"/>
    <property type="match status" value="1"/>
</dbReference>
<dbReference type="SUPFAM" id="SSF53335">
    <property type="entry name" value="S-adenosyl-L-methionine-dependent methyltransferases"/>
    <property type="match status" value="1"/>
</dbReference>
<comment type="function">
    <text evidence="1">Converts the free carboxyl group of a malonyl-thioester to its methyl ester by transfer of a methyl group from S-adenosyl-L-methionine (SAM). It allows to synthesize pimeloyl-ACP via the fatty acid synthetic pathway.</text>
</comment>
<comment type="catalytic activity">
    <reaction evidence="1">
        <text>malonyl-[ACP] + S-adenosyl-L-methionine = malonyl-[ACP] methyl ester + S-adenosyl-L-homocysteine</text>
        <dbReference type="Rhea" id="RHEA:17105"/>
        <dbReference type="Rhea" id="RHEA-COMP:9623"/>
        <dbReference type="Rhea" id="RHEA-COMP:9954"/>
        <dbReference type="ChEBI" id="CHEBI:57856"/>
        <dbReference type="ChEBI" id="CHEBI:59789"/>
        <dbReference type="ChEBI" id="CHEBI:78449"/>
        <dbReference type="ChEBI" id="CHEBI:78845"/>
        <dbReference type="EC" id="2.1.1.197"/>
    </reaction>
</comment>
<comment type="pathway">
    <text evidence="1">Cofactor biosynthesis; biotin biosynthesis.</text>
</comment>
<comment type="similarity">
    <text evidence="1">Belongs to the methyltransferase superfamily.</text>
</comment>